<proteinExistence type="inferred from homology"/>
<comment type="function">
    <text evidence="1">Specifically methylates position 2 of adenine 2503 in 23S rRNA and position 2 of adenine 37 in tRNAs.</text>
</comment>
<comment type="catalytic activity">
    <reaction evidence="1">
        <text>adenosine(2503) in 23S rRNA + 2 reduced [2Fe-2S]-[ferredoxin] + 2 S-adenosyl-L-methionine = 2-methyladenosine(2503) in 23S rRNA + 5'-deoxyadenosine + L-methionine + 2 oxidized [2Fe-2S]-[ferredoxin] + S-adenosyl-L-homocysteine</text>
        <dbReference type="Rhea" id="RHEA:42916"/>
        <dbReference type="Rhea" id="RHEA-COMP:10000"/>
        <dbReference type="Rhea" id="RHEA-COMP:10001"/>
        <dbReference type="Rhea" id="RHEA-COMP:10152"/>
        <dbReference type="Rhea" id="RHEA-COMP:10282"/>
        <dbReference type="ChEBI" id="CHEBI:17319"/>
        <dbReference type="ChEBI" id="CHEBI:33737"/>
        <dbReference type="ChEBI" id="CHEBI:33738"/>
        <dbReference type="ChEBI" id="CHEBI:57844"/>
        <dbReference type="ChEBI" id="CHEBI:57856"/>
        <dbReference type="ChEBI" id="CHEBI:59789"/>
        <dbReference type="ChEBI" id="CHEBI:74411"/>
        <dbReference type="ChEBI" id="CHEBI:74497"/>
        <dbReference type="EC" id="2.1.1.192"/>
    </reaction>
</comment>
<comment type="catalytic activity">
    <reaction evidence="1">
        <text>adenosine(37) in tRNA + 2 reduced [2Fe-2S]-[ferredoxin] + 2 S-adenosyl-L-methionine = 2-methyladenosine(37) in tRNA + 5'-deoxyadenosine + L-methionine + 2 oxidized [2Fe-2S]-[ferredoxin] + S-adenosyl-L-homocysteine</text>
        <dbReference type="Rhea" id="RHEA:43332"/>
        <dbReference type="Rhea" id="RHEA-COMP:10000"/>
        <dbReference type="Rhea" id="RHEA-COMP:10001"/>
        <dbReference type="Rhea" id="RHEA-COMP:10162"/>
        <dbReference type="Rhea" id="RHEA-COMP:10485"/>
        <dbReference type="ChEBI" id="CHEBI:17319"/>
        <dbReference type="ChEBI" id="CHEBI:33737"/>
        <dbReference type="ChEBI" id="CHEBI:33738"/>
        <dbReference type="ChEBI" id="CHEBI:57844"/>
        <dbReference type="ChEBI" id="CHEBI:57856"/>
        <dbReference type="ChEBI" id="CHEBI:59789"/>
        <dbReference type="ChEBI" id="CHEBI:74411"/>
        <dbReference type="ChEBI" id="CHEBI:74497"/>
        <dbReference type="EC" id="2.1.1.192"/>
    </reaction>
</comment>
<comment type="cofactor">
    <cofactor evidence="1">
        <name>[4Fe-4S] cluster</name>
        <dbReference type="ChEBI" id="CHEBI:49883"/>
    </cofactor>
    <text evidence="1">Binds 1 [4Fe-4S] cluster. The cluster is coordinated with 3 cysteines and an exchangeable S-adenosyl-L-methionine.</text>
</comment>
<comment type="subcellular location">
    <subcellularLocation>
        <location evidence="1">Cytoplasm</location>
    </subcellularLocation>
</comment>
<comment type="miscellaneous">
    <text evidence="1">Reaction proceeds by a ping-pong mechanism involving intermediate methylation of a conserved cysteine residue.</text>
</comment>
<comment type="similarity">
    <text evidence="1">Belongs to the radical SAM superfamily. RlmN family.</text>
</comment>
<protein>
    <recommendedName>
        <fullName evidence="1">Probable dual-specificity RNA methyltransferase RlmN</fullName>
        <ecNumber evidence="1">2.1.1.192</ecNumber>
    </recommendedName>
    <alternativeName>
        <fullName evidence="1">23S rRNA (adenine(2503)-C(2))-methyltransferase</fullName>
    </alternativeName>
    <alternativeName>
        <fullName evidence="1">23S rRNA m2A2503 methyltransferase</fullName>
    </alternativeName>
    <alternativeName>
        <fullName evidence="1">Ribosomal RNA large subunit methyltransferase N</fullName>
    </alternativeName>
    <alternativeName>
        <fullName evidence="1">tRNA (adenine(37)-C(2))-methyltransferase</fullName>
    </alternativeName>
    <alternativeName>
        <fullName evidence="1">tRNA m2A37 methyltransferase</fullName>
    </alternativeName>
</protein>
<gene>
    <name evidence="1" type="primary">rlmN</name>
    <name type="ordered locus">BCE_3906</name>
</gene>
<dbReference type="EC" id="2.1.1.192" evidence="1"/>
<dbReference type="EMBL" id="AE017194">
    <property type="protein sequence ID" value="AAS42811.1"/>
    <property type="molecule type" value="Genomic_DNA"/>
</dbReference>
<dbReference type="SMR" id="Q732K6"/>
<dbReference type="KEGG" id="bca:BCE_3906"/>
<dbReference type="HOGENOM" id="CLU_029101_0_1_9"/>
<dbReference type="Proteomes" id="UP000002527">
    <property type="component" value="Chromosome"/>
</dbReference>
<dbReference type="GO" id="GO:0005737">
    <property type="term" value="C:cytoplasm"/>
    <property type="evidence" value="ECO:0007669"/>
    <property type="project" value="UniProtKB-SubCell"/>
</dbReference>
<dbReference type="GO" id="GO:0051539">
    <property type="term" value="F:4 iron, 4 sulfur cluster binding"/>
    <property type="evidence" value="ECO:0007669"/>
    <property type="project" value="UniProtKB-UniRule"/>
</dbReference>
<dbReference type="GO" id="GO:0046872">
    <property type="term" value="F:metal ion binding"/>
    <property type="evidence" value="ECO:0007669"/>
    <property type="project" value="UniProtKB-KW"/>
</dbReference>
<dbReference type="GO" id="GO:0070040">
    <property type="term" value="F:rRNA (adenine(2503)-C2-)-methyltransferase activity"/>
    <property type="evidence" value="ECO:0007669"/>
    <property type="project" value="UniProtKB-UniRule"/>
</dbReference>
<dbReference type="GO" id="GO:0019843">
    <property type="term" value="F:rRNA binding"/>
    <property type="evidence" value="ECO:0007669"/>
    <property type="project" value="UniProtKB-UniRule"/>
</dbReference>
<dbReference type="GO" id="GO:0002935">
    <property type="term" value="F:tRNA (adenine(37)-C2)-methyltransferase activity"/>
    <property type="evidence" value="ECO:0007669"/>
    <property type="project" value="UniProtKB-UniRule"/>
</dbReference>
<dbReference type="GO" id="GO:0000049">
    <property type="term" value="F:tRNA binding"/>
    <property type="evidence" value="ECO:0007669"/>
    <property type="project" value="UniProtKB-UniRule"/>
</dbReference>
<dbReference type="GO" id="GO:0070475">
    <property type="term" value="P:rRNA base methylation"/>
    <property type="evidence" value="ECO:0007669"/>
    <property type="project" value="UniProtKB-UniRule"/>
</dbReference>
<dbReference type="GO" id="GO:0030488">
    <property type="term" value="P:tRNA methylation"/>
    <property type="evidence" value="ECO:0007669"/>
    <property type="project" value="UniProtKB-UniRule"/>
</dbReference>
<dbReference type="CDD" id="cd01335">
    <property type="entry name" value="Radical_SAM"/>
    <property type="match status" value="1"/>
</dbReference>
<dbReference type="FunFam" id="1.10.150.530:FF:000002">
    <property type="entry name" value="Probable dual-specificity RNA methyltransferase RlmN"/>
    <property type="match status" value="1"/>
</dbReference>
<dbReference type="FunFam" id="3.20.20.70:FF:000014">
    <property type="entry name" value="Probable dual-specificity RNA methyltransferase RlmN"/>
    <property type="match status" value="1"/>
</dbReference>
<dbReference type="Gene3D" id="1.10.150.530">
    <property type="match status" value="1"/>
</dbReference>
<dbReference type="Gene3D" id="3.20.20.70">
    <property type="entry name" value="Aldolase class I"/>
    <property type="match status" value="1"/>
</dbReference>
<dbReference type="HAMAP" id="MF_01849">
    <property type="entry name" value="RNA_methyltr_RlmN"/>
    <property type="match status" value="1"/>
</dbReference>
<dbReference type="InterPro" id="IPR013785">
    <property type="entry name" value="Aldolase_TIM"/>
</dbReference>
<dbReference type="InterPro" id="IPR040072">
    <property type="entry name" value="Methyltransferase_A"/>
</dbReference>
<dbReference type="InterPro" id="IPR048641">
    <property type="entry name" value="RlmN_N"/>
</dbReference>
<dbReference type="InterPro" id="IPR027492">
    <property type="entry name" value="RNA_MTrfase_RlmN"/>
</dbReference>
<dbReference type="InterPro" id="IPR004383">
    <property type="entry name" value="rRNA_lsu_MTrfase_RlmN/Cfr"/>
</dbReference>
<dbReference type="InterPro" id="IPR007197">
    <property type="entry name" value="rSAM"/>
</dbReference>
<dbReference type="NCBIfam" id="TIGR00048">
    <property type="entry name" value="rRNA_mod_RlmN"/>
    <property type="match status" value="1"/>
</dbReference>
<dbReference type="PANTHER" id="PTHR30544">
    <property type="entry name" value="23S RRNA METHYLTRANSFERASE"/>
    <property type="match status" value="1"/>
</dbReference>
<dbReference type="PANTHER" id="PTHR30544:SF5">
    <property type="entry name" value="RADICAL SAM CORE DOMAIN-CONTAINING PROTEIN"/>
    <property type="match status" value="1"/>
</dbReference>
<dbReference type="Pfam" id="PF04055">
    <property type="entry name" value="Radical_SAM"/>
    <property type="match status" value="1"/>
</dbReference>
<dbReference type="Pfam" id="PF21016">
    <property type="entry name" value="RlmN_N"/>
    <property type="match status" value="1"/>
</dbReference>
<dbReference type="PIRSF" id="PIRSF006004">
    <property type="entry name" value="CHP00048"/>
    <property type="match status" value="1"/>
</dbReference>
<dbReference type="SFLD" id="SFLDF00275">
    <property type="entry name" value="adenosine_C2_methyltransferase"/>
    <property type="match status" value="1"/>
</dbReference>
<dbReference type="SFLD" id="SFLDS00029">
    <property type="entry name" value="Radical_SAM"/>
    <property type="match status" value="1"/>
</dbReference>
<dbReference type="SUPFAM" id="SSF102114">
    <property type="entry name" value="Radical SAM enzymes"/>
    <property type="match status" value="1"/>
</dbReference>
<dbReference type="PROSITE" id="PS51918">
    <property type="entry name" value="RADICAL_SAM"/>
    <property type="match status" value="1"/>
</dbReference>
<sequence length="362" mass="41553">METTVRKQKKNLETKKPSIYSLQLHEMQDWLKEQGEPKFRAGQIFDWLYKKRVKNYEDMSNLSKGLREKLSNSFDITTLNTLVKQTSSDGTIKFLFQLYDGYSIETVLMRHEYGNSICVTTQVGCRIGCTFCASTLGGLKRNLEAGEIVAQVVEVQRALDESEERVSSLVVMGIGEPFDNYDNLMGFLRIINHEKGLHIGARHMTVSTSGIIPKIYKFAEEDLQINFAISLHAPNSELRSKLMPINRAYKLPDLMEAIKYYVNRTGRRITFEYGLFGGENDQVEHAEELAALLKGVKCHVNLIPVNYVPERDYVRTPREQIFLFEKTLKDRGVNVTIRREQGHDIDAACGQLRAKERKEETR</sequence>
<name>RLMN_BACC1</name>
<organism>
    <name type="scientific">Bacillus cereus (strain ATCC 10987 / NRS 248)</name>
    <dbReference type="NCBI Taxonomy" id="222523"/>
    <lineage>
        <taxon>Bacteria</taxon>
        <taxon>Bacillati</taxon>
        <taxon>Bacillota</taxon>
        <taxon>Bacilli</taxon>
        <taxon>Bacillales</taxon>
        <taxon>Bacillaceae</taxon>
        <taxon>Bacillus</taxon>
        <taxon>Bacillus cereus group</taxon>
    </lineage>
</organism>
<feature type="chain" id="PRO_0000350028" description="Probable dual-specificity RNA methyltransferase RlmN">
    <location>
        <begin position="1"/>
        <end position="362"/>
    </location>
</feature>
<feature type="domain" description="Radical SAM core" evidence="2">
    <location>
        <begin position="111"/>
        <end position="344"/>
    </location>
</feature>
<feature type="active site" description="Proton acceptor" evidence="1">
    <location>
        <position position="105"/>
    </location>
</feature>
<feature type="active site" description="S-methylcysteine intermediate" evidence="1">
    <location>
        <position position="349"/>
    </location>
</feature>
<feature type="binding site" evidence="1">
    <location>
        <position position="125"/>
    </location>
    <ligand>
        <name>[4Fe-4S] cluster</name>
        <dbReference type="ChEBI" id="CHEBI:49883"/>
        <note>4Fe-4S-S-AdoMet</note>
    </ligand>
</feature>
<feature type="binding site" evidence="1">
    <location>
        <position position="129"/>
    </location>
    <ligand>
        <name>[4Fe-4S] cluster</name>
        <dbReference type="ChEBI" id="CHEBI:49883"/>
        <note>4Fe-4S-S-AdoMet</note>
    </ligand>
</feature>
<feature type="binding site" evidence="1">
    <location>
        <position position="132"/>
    </location>
    <ligand>
        <name>[4Fe-4S] cluster</name>
        <dbReference type="ChEBI" id="CHEBI:49883"/>
        <note>4Fe-4S-S-AdoMet</note>
    </ligand>
</feature>
<feature type="binding site" evidence="1">
    <location>
        <begin position="175"/>
        <end position="176"/>
    </location>
    <ligand>
        <name>S-adenosyl-L-methionine</name>
        <dbReference type="ChEBI" id="CHEBI:59789"/>
    </ligand>
</feature>
<feature type="binding site" evidence="1">
    <location>
        <position position="207"/>
    </location>
    <ligand>
        <name>S-adenosyl-L-methionine</name>
        <dbReference type="ChEBI" id="CHEBI:59789"/>
    </ligand>
</feature>
<feature type="binding site" evidence="1">
    <location>
        <begin position="230"/>
        <end position="232"/>
    </location>
    <ligand>
        <name>S-adenosyl-L-methionine</name>
        <dbReference type="ChEBI" id="CHEBI:59789"/>
    </ligand>
</feature>
<feature type="binding site" evidence="1">
    <location>
        <position position="306"/>
    </location>
    <ligand>
        <name>S-adenosyl-L-methionine</name>
        <dbReference type="ChEBI" id="CHEBI:59789"/>
    </ligand>
</feature>
<feature type="disulfide bond" description="(transient)" evidence="1">
    <location>
        <begin position="118"/>
        <end position="349"/>
    </location>
</feature>
<accession>Q732K6</accession>
<evidence type="ECO:0000255" key="1">
    <source>
        <dbReference type="HAMAP-Rule" id="MF_01849"/>
    </source>
</evidence>
<evidence type="ECO:0000255" key="2">
    <source>
        <dbReference type="PROSITE-ProRule" id="PRU01266"/>
    </source>
</evidence>
<reference key="1">
    <citation type="journal article" date="2004" name="Nucleic Acids Res.">
        <title>The genome sequence of Bacillus cereus ATCC 10987 reveals metabolic adaptations and a large plasmid related to Bacillus anthracis pXO1.</title>
        <authorList>
            <person name="Rasko D.A."/>
            <person name="Ravel J."/>
            <person name="Oekstad O.A."/>
            <person name="Helgason E."/>
            <person name="Cer R.Z."/>
            <person name="Jiang L."/>
            <person name="Shores K.A."/>
            <person name="Fouts D.E."/>
            <person name="Tourasse N.J."/>
            <person name="Angiuoli S.V."/>
            <person name="Kolonay J.F."/>
            <person name="Nelson W.C."/>
            <person name="Kolstoe A.-B."/>
            <person name="Fraser C.M."/>
            <person name="Read T.D."/>
        </authorList>
    </citation>
    <scope>NUCLEOTIDE SEQUENCE [LARGE SCALE GENOMIC DNA]</scope>
    <source>
        <strain>ATCC 10987 / NRS 248</strain>
    </source>
</reference>
<keyword id="KW-0004">4Fe-4S</keyword>
<keyword id="KW-0963">Cytoplasm</keyword>
<keyword id="KW-1015">Disulfide bond</keyword>
<keyword id="KW-0408">Iron</keyword>
<keyword id="KW-0411">Iron-sulfur</keyword>
<keyword id="KW-0479">Metal-binding</keyword>
<keyword id="KW-0489">Methyltransferase</keyword>
<keyword id="KW-0698">rRNA processing</keyword>
<keyword id="KW-0949">S-adenosyl-L-methionine</keyword>
<keyword id="KW-0808">Transferase</keyword>
<keyword id="KW-0819">tRNA processing</keyword>